<accession>Q9ES21</accession>
<reference key="1">
    <citation type="journal article" date="2000" name="J. Biol. Chem.">
        <title>Functional characterization of a mammalian Sac1 and mutants exhibiting substrate-specific defects in phosphoinositide phosphatase activity.</title>
        <authorList>
            <person name="Nemoto Y."/>
            <person name="Kearns B.G."/>
            <person name="Wenk M.R."/>
            <person name="Chen H."/>
            <person name="Mori K."/>
            <person name="Alb J.G. Jr."/>
            <person name="De Camilli P."/>
            <person name="Bankaitis V.A."/>
        </authorList>
    </citation>
    <scope>NUCLEOTIDE SEQUENCE [MRNA]</scope>
    <scope>FUNCTION</scope>
    <scope>CATALYTIC ACTIVITY</scope>
    <scope>TOPOLOGY</scope>
    <scope>SUBCELLULAR LOCATION</scope>
    <scope>MUTAGENESIS OF ASP-391 AND ALA-442</scope>
    <scope>TISSUE SPECIFICITY</scope>
    <source>
        <strain>Sprague-Dawley</strain>
        <tissue>Brain</tissue>
    </source>
</reference>
<reference key="2">
    <citation type="journal article" date="2016" name="J. Cell Biol.">
        <title>Dynamic formation of ER-PM junctions presents a lipid phosphatase to regulate phosphoinositides.</title>
        <authorList>
            <person name="Dickson E.J."/>
            <person name="Jensen J.B."/>
            <person name="Vivas O."/>
            <person name="Kruse M."/>
            <person name="Traynor-Kaplan A.E."/>
            <person name="Hille B."/>
        </authorList>
    </citation>
    <scope>FUNCTION</scope>
    <scope>CATALYTIC ACTIVITY</scope>
    <scope>SUBCELLULAR LOCATION</scope>
</reference>
<protein>
    <recommendedName>
        <fullName>Phosphatidylinositol-3-phosphatase SAC1</fullName>
        <ecNumber evidence="4">3.1.3.64</ecNumber>
    </recommendedName>
    <alternativeName>
        <fullName evidence="6">Phosphatidylinositol-4-phosphate phosphatase</fullName>
    </alternativeName>
    <alternativeName>
        <fullName>Suppressor of actin mutations 1-like protein</fullName>
    </alternativeName>
</protein>
<feature type="chain" id="PRO_0000317174" description="Phosphatidylinositol-3-phosphatase SAC1">
    <location>
        <begin position="1"/>
        <end position="587"/>
    </location>
</feature>
<feature type="topological domain" description="Cytoplasmic" evidence="7">
    <location>
        <begin position="1"/>
        <end position="520"/>
    </location>
</feature>
<feature type="transmembrane region" description="Helical" evidence="2">
    <location>
        <begin position="521"/>
        <end position="541"/>
    </location>
</feature>
<feature type="topological domain" description="Lumenal" evidence="7">
    <location>
        <begin position="542"/>
        <end position="548"/>
    </location>
</feature>
<feature type="transmembrane region" description="Helical" evidence="2">
    <location>
        <begin position="549"/>
        <end position="569"/>
    </location>
</feature>
<feature type="topological domain" description="Cytoplasmic" evidence="7">
    <location>
        <begin position="570"/>
        <end position="587"/>
    </location>
</feature>
<feature type="domain" description="SAC" evidence="3">
    <location>
        <begin position="122"/>
        <end position="451"/>
    </location>
</feature>
<feature type="region of interest" description="Essential for phosphatidylinositol-4-phosphate phosphatase activity" evidence="1">
    <location>
        <begin position="452"/>
        <end position="587"/>
    </location>
</feature>
<feature type="modified residue" description="N6-acetyllysine" evidence="1">
    <location>
        <position position="456"/>
    </location>
</feature>
<feature type="mutagenesis site" description="Reduces phosphatase activity towards PtdIns(4)P, but not towards PtdIns(3)P or PtdIns(3,5)P2." evidence="4">
    <original>D</original>
    <variation>N</variation>
    <location>
        <position position="391"/>
    </location>
</feature>
<feature type="mutagenesis site" description="Reduces phosphatase activity towards PtdIns(4)P, but not towards PtdIns(3)P or PtdIns(3,5)P2." evidence="4">
    <original>A</original>
    <variation>V</variation>
    <location>
        <position position="442"/>
    </location>
</feature>
<sequence>MAATAYEHLKLHITPEKFYVEACDDGADDVLIIDRVSTEVTLAVKKDVPPSAVTRPIYGIMGTIHLVAGNYLVVITKKMKVGEFFNHVIWKATDFDVLSYKKTMLHLTDIQLQDNKTFLAMLNHVLSTDGFYFSTTYDLTHTLQRLSNTSPEFQEMSLLERADQRFVWNGHLLRELSAQPEVHRFALPVLHGFITMHSCSINGKYFDWILISRRSCFRAGVRYYVRGIDSEGHAANFVETEQIVHYSGNRASFVQTRGSIPVFWSQRPNLKYKPDPQINKVANHMDGFQRHFDSQVIIYGKQVIINLVNHKGSEKPLEQTFAKMVSSLGSGMIRYIAFDFHKECKNMRWDRLSILLDQVAEMQDELSYFLVDSAGKVVTNQEGVFRSNCMDCLDRTNVIQSLLARRSLQAQLQRLGVLHVGQKLEEQDEFEKIYKNAWADNANACAKQYAGTGALKTDFTRTGKRTQLGLVMDGFNSLLRYYKNNFSDGFRQDSIDLFLGNYSVDELDSHSPLSVPRDWKFLALPIIMVVAFSMCIICLLMAGDTWTETLAYVLFWGVASIGTFFIILYNGKDFVDAPRLVQKEKID</sequence>
<comment type="function">
    <text evidence="1 4 5">Phosphoinositide phosphatase which catalyzes the hydrolysis of phosphatidylinositol 4-phosphate (PtdIns(4)P), phosphatidylinositol 3-phosphate (PtdIns(3)P) and has low activity towards phosphatidylinositol-3,5-bisphosphate (PtdIns(3,5)P2) (PubMed:10887188, PubMed:27044890). Shows a very robust PtdIns(4)P phosphatase activity when it binds PtdIns(4)P in a 'cis' configuration in the cellular environment, with much less activity seen when it binds PtdIns(4)P in 'trans' configuration (By similarity). PtdIns(4)P phosphatase activity (when it binds PtdIns(4)P in 'trans' configuration) is enhanced in the presence of PLEKHA3 (By similarity).</text>
</comment>
<comment type="catalytic activity">
    <reaction evidence="4">
        <text>a 1,2-diacyl-sn-glycero-3-phospho-(1D-myo-inositol-3-phosphate) + H2O = a 1,2-diacyl-sn-glycero-3-phospho-(1D-myo-inositol) + phosphate</text>
        <dbReference type="Rhea" id="RHEA:12316"/>
        <dbReference type="ChEBI" id="CHEBI:15377"/>
        <dbReference type="ChEBI" id="CHEBI:43474"/>
        <dbReference type="ChEBI" id="CHEBI:57880"/>
        <dbReference type="ChEBI" id="CHEBI:58088"/>
        <dbReference type="EC" id="3.1.3.64"/>
    </reaction>
    <physiologicalReaction direction="left-to-right" evidence="7">
        <dbReference type="Rhea" id="RHEA:12317"/>
    </physiologicalReaction>
</comment>
<comment type="catalytic activity">
    <reaction evidence="4 5">
        <text>a 1,2-diacyl-sn-glycero-3-phospho-(1D-myo-inositol 4-phosphate) + H2O = a 1,2-diacyl-sn-glycero-3-phospho-(1D-myo-inositol) + phosphate</text>
        <dbReference type="Rhea" id="RHEA:55652"/>
        <dbReference type="ChEBI" id="CHEBI:15377"/>
        <dbReference type="ChEBI" id="CHEBI:43474"/>
        <dbReference type="ChEBI" id="CHEBI:57880"/>
        <dbReference type="ChEBI" id="CHEBI:58178"/>
    </reaction>
    <physiologicalReaction direction="left-to-right" evidence="7">
        <dbReference type="Rhea" id="RHEA:55653"/>
    </physiologicalReaction>
</comment>
<comment type="subunit">
    <text evidence="1">Interacts with TMEM39A (By similarity). Interacts with SEC23A and SEC24A; this interaction is reduced in the absence of TMEM39A (By similarity). Interacts with PLEKHA3 and VAPA and/or VAPB to form a ternary complex (By similarity).</text>
</comment>
<comment type="subcellular location">
    <subcellularLocation>
        <location evidence="4">Endoplasmic reticulum membrane</location>
        <topology evidence="2">Multi-pass membrane protein</topology>
    </subcellularLocation>
    <subcellularLocation>
        <location evidence="1">Golgi apparatus membrane</location>
        <topology evidence="2">Multi-pass membrane protein</topology>
    </subcellularLocation>
    <text evidence="1 5">Trafficking between the ER and Golgi is regulated by nutrient status and by TMEM39A (By similarity). Localizes to endoplasmic reticulum-plasma membrane contact sites (EPCS) in the presence of phosphatidylinositol-4,5-bisphosphate (PubMed:27044890).</text>
</comment>
<comment type="tissue specificity">
    <text evidence="4">Detected in spleen, lung, liver, skeletal muscle, kidney, testis and in cerebellar Purkinje cells (at protein level). Ubiquitous. Highly expressed in brain, spleen, liver and kidney.</text>
</comment>
<keyword id="KW-0007">Acetylation</keyword>
<keyword id="KW-0256">Endoplasmic reticulum</keyword>
<keyword id="KW-0333">Golgi apparatus</keyword>
<keyword id="KW-0378">Hydrolase</keyword>
<keyword id="KW-0443">Lipid metabolism</keyword>
<keyword id="KW-0472">Membrane</keyword>
<keyword id="KW-1185">Reference proteome</keyword>
<keyword id="KW-0812">Transmembrane</keyword>
<keyword id="KW-1133">Transmembrane helix</keyword>
<name>SAC1_RAT</name>
<proteinExistence type="evidence at protein level"/>
<evidence type="ECO:0000250" key="1">
    <source>
        <dbReference type="UniProtKB" id="Q9NTJ5"/>
    </source>
</evidence>
<evidence type="ECO:0000255" key="2"/>
<evidence type="ECO:0000255" key="3">
    <source>
        <dbReference type="PROSITE-ProRule" id="PRU00183"/>
    </source>
</evidence>
<evidence type="ECO:0000269" key="4">
    <source>
    </source>
</evidence>
<evidence type="ECO:0000269" key="5">
    <source>
    </source>
</evidence>
<evidence type="ECO:0000303" key="6">
    <source>
    </source>
</evidence>
<evidence type="ECO:0000305" key="7">
    <source>
    </source>
</evidence>
<dbReference type="EC" id="3.1.3.64" evidence="4"/>
<dbReference type="EMBL" id="AF251186">
    <property type="protein sequence ID" value="AAG29810.1"/>
    <property type="molecule type" value="mRNA"/>
</dbReference>
<dbReference type="RefSeq" id="NP_446250.1">
    <property type="nucleotide sequence ID" value="NM_053798.3"/>
</dbReference>
<dbReference type="SMR" id="Q9ES21"/>
<dbReference type="BioGRID" id="250459">
    <property type="interactions" value="1"/>
</dbReference>
<dbReference type="FunCoup" id="Q9ES21">
    <property type="interactions" value="5086"/>
</dbReference>
<dbReference type="IntAct" id="Q9ES21">
    <property type="interactions" value="1"/>
</dbReference>
<dbReference type="STRING" id="10116.ENSRNOP00000007223"/>
<dbReference type="iPTMnet" id="Q9ES21"/>
<dbReference type="PhosphoSitePlus" id="Q9ES21"/>
<dbReference type="SwissPalm" id="Q9ES21"/>
<dbReference type="jPOST" id="Q9ES21"/>
<dbReference type="PaxDb" id="10116-ENSRNOP00000007223"/>
<dbReference type="GeneID" id="116482"/>
<dbReference type="KEGG" id="rno:116482"/>
<dbReference type="UCSC" id="RGD:69223">
    <property type="organism name" value="rat"/>
</dbReference>
<dbReference type="AGR" id="RGD:69223"/>
<dbReference type="CTD" id="22908"/>
<dbReference type="RGD" id="69223">
    <property type="gene designation" value="Sacm1l"/>
</dbReference>
<dbReference type="VEuPathDB" id="HostDB:ENSRNOG00000005149"/>
<dbReference type="eggNOG" id="KOG1889">
    <property type="taxonomic scope" value="Eukaryota"/>
</dbReference>
<dbReference type="HOGENOM" id="CLU_003016_7_4_1"/>
<dbReference type="InParanoid" id="Q9ES21"/>
<dbReference type="PhylomeDB" id="Q9ES21"/>
<dbReference type="TreeFam" id="TF313543"/>
<dbReference type="Reactome" id="R-RNO-1483248">
    <property type="pathway name" value="Synthesis of PIPs at the ER membrane"/>
</dbReference>
<dbReference type="Reactome" id="R-RNO-1660514">
    <property type="pathway name" value="Synthesis of PIPs at the Golgi membrane"/>
</dbReference>
<dbReference type="PRO" id="PR:Q9ES21"/>
<dbReference type="Proteomes" id="UP000002494">
    <property type="component" value="Chromosome 8"/>
</dbReference>
<dbReference type="Bgee" id="ENSRNOG00000005149">
    <property type="expression patterns" value="Expressed in cerebellum and 20 other cell types or tissues"/>
</dbReference>
<dbReference type="GO" id="GO:0032281">
    <property type="term" value="C:AMPA glutamate receptor complex"/>
    <property type="evidence" value="ECO:0000266"/>
    <property type="project" value="RGD"/>
</dbReference>
<dbReference type="GO" id="GO:0005783">
    <property type="term" value="C:endoplasmic reticulum"/>
    <property type="evidence" value="ECO:0000318"/>
    <property type="project" value="GO_Central"/>
</dbReference>
<dbReference type="GO" id="GO:0005789">
    <property type="term" value="C:endoplasmic reticulum membrane"/>
    <property type="evidence" value="ECO:0000314"/>
    <property type="project" value="UniProtKB"/>
</dbReference>
<dbReference type="GO" id="GO:0140268">
    <property type="term" value="C:endoplasmic reticulum-plasma membrane contact site"/>
    <property type="evidence" value="ECO:0000314"/>
    <property type="project" value="UniProtKB"/>
</dbReference>
<dbReference type="GO" id="GO:0098978">
    <property type="term" value="C:glutamatergic synapse"/>
    <property type="evidence" value="ECO:0000314"/>
    <property type="project" value="SynGO"/>
</dbReference>
<dbReference type="GO" id="GO:0005794">
    <property type="term" value="C:Golgi apparatus"/>
    <property type="evidence" value="ECO:0000250"/>
    <property type="project" value="UniProtKB"/>
</dbReference>
<dbReference type="GO" id="GO:0000139">
    <property type="term" value="C:Golgi membrane"/>
    <property type="evidence" value="ECO:0000250"/>
    <property type="project" value="UniProtKB"/>
</dbReference>
<dbReference type="GO" id="GO:0016791">
    <property type="term" value="F:phosphatase activity"/>
    <property type="evidence" value="ECO:0000315"/>
    <property type="project" value="UniProtKB"/>
</dbReference>
<dbReference type="GO" id="GO:0106018">
    <property type="term" value="F:phosphatidylinositol-3,5-bisphosphate phosphatase activity"/>
    <property type="evidence" value="ECO:0000314"/>
    <property type="project" value="RGD"/>
</dbReference>
<dbReference type="GO" id="GO:0004438">
    <property type="term" value="F:phosphatidylinositol-3-phosphate phosphatase activity"/>
    <property type="evidence" value="ECO:0000314"/>
    <property type="project" value="RGD"/>
</dbReference>
<dbReference type="GO" id="GO:0043812">
    <property type="term" value="F:phosphatidylinositol-4-phosphate phosphatase activity"/>
    <property type="evidence" value="ECO:0000314"/>
    <property type="project" value="UniProtKB"/>
</dbReference>
<dbReference type="GO" id="GO:0098967">
    <property type="term" value="P:exocytic insertion of neurotransmitter receptor to postsynaptic membrane"/>
    <property type="evidence" value="ECO:0000266"/>
    <property type="project" value="RGD"/>
</dbReference>
<dbReference type="GO" id="GO:0098969">
    <property type="term" value="P:neurotransmitter receptor transport to postsynaptic membrane"/>
    <property type="evidence" value="ECO:0000314"/>
    <property type="project" value="SynGO"/>
</dbReference>
<dbReference type="GO" id="GO:0046856">
    <property type="term" value="P:phosphatidylinositol dephosphorylation"/>
    <property type="evidence" value="ECO:0000315"/>
    <property type="project" value="RGD"/>
</dbReference>
<dbReference type="GO" id="GO:0099003">
    <property type="term" value="P:vesicle-mediated transport in synapse"/>
    <property type="evidence" value="ECO:0000314"/>
    <property type="project" value="SynGO"/>
</dbReference>
<dbReference type="InterPro" id="IPR002013">
    <property type="entry name" value="SAC_dom"/>
</dbReference>
<dbReference type="PANTHER" id="PTHR45662">
    <property type="entry name" value="PHOSPHATIDYLINOSITIDE PHOSPHATASE SAC1"/>
    <property type="match status" value="1"/>
</dbReference>
<dbReference type="PANTHER" id="PTHR45662:SF2">
    <property type="entry name" value="PHOSPHATIDYLINOSITOL-3-PHOSPHATASE SAC1"/>
    <property type="match status" value="1"/>
</dbReference>
<dbReference type="Pfam" id="PF02383">
    <property type="entry name" value="Syja_N"/>
    <property type="match status" value="1"/>
</dbReference>
<dbReference type="PROSITE" id="PS50275">
    <property type="entry name" value="SAC"/>
    <property type="match status" value="1"/>
</dbReference>
<organism>
    <name type="scientific">Rattus norvegicus</name>
    <name type="common">Rat</name>
    <dbReference type="NCBI Taxonomy" id="10116"/>
    <lineage>
        <taxon>Eukaryota</taxon>
        <taxon>Metazoa</taxon>
        <taxon>Chordata</taxon>
        <taxon>Craniata</taxon>
        <taxon>Vertebrata</taxon>
        <taxon>Euteleostomi</taxon>
        <taxon>Mammalia</taxon>
        <taxon>Eutheria</taxon>
        <taxon>Euarchontoglires</taxon>
        <taxon>Glires</taxon>
        <taxon>Rodentia</taxon>
        <taxon>Myomorpha</taxon>
        <taxon>Muroidea</taxon>
        <taxon>Muridae</taxon>
        <taxon>Murinae</taxon>
        <taxon>Rattus</taxon>
    </lineage>
</organism>
<gene>
    <name type="primary">Sacm1l</name>
    <name evidence="6" type="synonym">Sac1</name>
</gene>